<proteinExistence type="inferred from homology"/>
<protein>
    <recommendedName>
        <fullName evidence="1">UDP-N-acetylmuramate--L-alanine ligase</fullName>
        <ecNumber evidence="1">6.3.2.8</ecNumber>
    </recommendedName>
    <alternativeName>
        <fullName evidence="1">UDP-N-acetylmuramoyl-L-alanine synthetase</fullName>
    </alternativeName>
</protein>
<reference key="1">
    <citation type="journal article" date="2002" name="DNA Res.">
        <title>Complete genomic sequence of nitrogen-fixing symbiotic bacterium Bradyrhizobium japonicum USDA110.</title>
        <authorList>
            <person name="Kaneko T."/>
            <person name="Nakamura Y."/>
            <person name="Sato S."/>
            <person name="Minamisawa K."/>
            <person name="Uchiumi T."/>
            <person name="Sasamoto S."/>
            <person name="Watanabe A."/>
            <person name="Idesawa K."/>
            <person name="Iriguchi M."/>
            <person name="Kawashima K."/>
            <person name="Kohara M."/>
            <person name="Matsumoto M."/>
            <person name="Shimpo S."/>
            <person name="Tsuruoka H."/>
            <person name="Wada T."/>
            <person name="Yamada M."/>
            <person name="Tabata S."/>
        </authorList>
    </citation>
    <scope>NUCLEOTIDE SEQUENCE [LARGE SCALE GENOMIC DNA]</scope>
    <source>
        <strain>JCM 10833 / BCRC 13528 / IAM 13628 / NBRC 14792 / USDA 110</strain>
    </source>
</reference>
<comment type="function">
    <text evidence="1">Cell wall formation.</text>
</comment>
<comment type="catalytic activity">
    <reaction evidence="1">
        <text>UDP-N-acetyl-alpha-D-muramate + L-alanine + ATP = UDP-N-acetyl-alpha-D-muramoyl-L-alanine + ADP + phosphate + H(+)</text>
        <dbReference type="Rhea" id="RHEA:23372"/>
        <dbReference type="ChEBI" id="CHEBI:15378"/>
        <dbReference type="ChEBI" id="CHEBI:30616"/>
        <dbReference type="ChEBI" id="CHEBI:43474"/>
        <dbReference type="ChEBI" id="CHEBI:57972"/>
        <dbReference type="ChEBI" id="CHEBI:70757"/>
        <dbReference type="ChEBI" id="CHEBI:83898"/>
        <dbReference type="ChEBI" id="CHEBI:456216"/>
        <dbReference type="EC" id="6.3.2.8"/>
    </reaction>
</comment>
<comment type="pathway">
    <text evidence="1">Cell wall biogenesis; peptidoglycan biosynthesis.</text>
</comment>
<comment type="subcellular location">
    <subcellularLocation>
        <location evidence="1">Cytoplasm</location>
    </subcellularLocation>
</comment>
<comment type="similarity">
    <text evidence="1">Belongs to the MurCDEF family.</text>
</comment>
<gene>
    <name evidence="1" type="primary">murC</name>
    <name type="ordered locus">bll6601</name>
</gene>
<feature type="chain" id="PRO_0000182065" description="UDP-N-acetylmuramate--L-alanine ligase">
    <location>
        <begin position="1"/>
        <end position="467"/>
    </location>
</feature>
<feature type="binding site" evidence="1">
    <location>
        <begin position="114"/>
        <end position="120"/>
    </location>
    <ligand>
        <name>ATP</name>
        <dbReference type="ChEBI" id="CHEBI:30616"/>
    </ligand>
</feature>
<name>MURC_BRADU</name>
<accession>Q89FU8</accession>
<keyword id="KW-0067">ATP-binding</keyword>
<keyword id="KW-0131">Cell cycle</keyword>
<keyword id="KW-0132">Cell division</keyword>
<keyword id="KW-0133">Cell shape</keyword>
<keyword id="KW-0961">Cell wall biogenesis/degradation</keyword>
<keyword id="KW-0963">Cytoplasm</keyword>
<keyword id="KW-0436">Ligase</keyword>
<keyword id="KW-0547">Nucleotide-binding</keyword>
<keyword id="KW-0573">Peptidoglycan synthesis</keyword>
<keyword id="KW-1185">Reference proteome</keyword>
<dbReference type="EC" id="6.3.2.8" evidence="1"/>
<dbReference type="EMBL" id="BA000040">
    <property type="protein sequence ID" value="BAC51866.1"/>
    <property type="molecule type" value="Genomic_DNA"/>
</dbReference>
<dbReference type="RefSeq" id="NP_773241.1">
    <property type="nucleotide sequence ID" value="NC_004463.1"/>
</dbReference>
<dbReference type="RefSeq" id="WP_011089341.1">
    <property type="nucleotide sequence ID" value="NC_004463.1"/>
</dbReference>
<dbReference type="SMR" id="Q89FU8"/>
<dbReference type="FunCoup" id="Q89FU8">
    <property type="interactions" value="372"/>
</dbReference>
<dbReference type="STRING" id="224911.AAV28_30585"/>
<dbReference type="EnsemblBacteria" id="BAC51866">
    <property type="protein sequence ID" value="BAC51866"/>
    <property type="gene ID" value="BAC51866"/>
</dbReference>
<dbReference type="GeneID" id="46493573"/>
<dbReference type="KEGG" id="bja:bll6601"/>
<dbReference type="PATRIC" id="fig|224911.44.peg.6613"/>
<dbReference type="eggNOG" id="COG0773">
    <property type="taxonomic scope" value="Bacteria"/>
</dbReference>
<dbReference type="HOGENOM" id="CLU_028104_2_2_5"/>
<dbReference type="InParanoid" id="Q89FU8"/>
<dbReference type="OrthoDB" id="9804126at2"/>
<dbReference type="PhylomeDB" id="Q89FU8"/>
<dbReference type="UniPathway" id="UPA00219"/>
<dbReference type="Proteomes" id="UP000002526">
    <property type="component" value="Chromosome"/>
</dbReference>
<dbReference type="GO" id="GO:0005737">
    <property type="term" value="C:cytoplasm"/>
    <property type="evidence" value="ECO:0007669"/>
    <property type="project" value="UniProtKB-SubCell"/>
</dbReference>
<dbReference type="GO" id="GO:0005524">
    <property type="term" value="F:ATP binding"/>
    <property type="evidence" value="ECO:0007669"/>
    <property type="project" value="UniProtKB-UniRule"/>
</dbReference>
<dbReference type="GO" id="GO:0008763">
    <property type="term" value="F:UDP-N-acetylmuramate-L-alanine ligase activity"/>
    <property type="evidence" value="ECO:0007669"/>
    <property type="project" value="UniProtKB-UniRule"/>
</dbReference>
<dbReference type="GO" id="GO:0051301">
    <property type="term" value="P:cell division"/>
    <property type="evidence" value="ECO:0007669"/>
    <property type="project" value="UniProtKB-KW"/>
</dbReference>
<dbReference type="GO" id="GO:0071555">
    <property type="term" value="P:cell wall organization"/>
    <property type="evidence" value="ECO:0007669"/>
    <property type="project" value="UniProtKB-KW"/>
</dbReference>
<dbReference type="GO" id="GO:0009252">
    <property type="term" value="P:peptidoglycan biosynthetic process"/>
    <property type="evidence" value="ECO:0007669"/>
    <property type="project" value="UniProtKB-UniRule"/>
</dbReference>
<dbReference type="GO" id="GO:0008360">
    <property type="term" value="P:regulation of cell shape"/>
    <property type="evidence" value="ECO:0007669"/>
    <property type="project" value="UniProtKB-KW"/>
</dbReference>
<dbReference type="Gene3D" id="3.90.190.20">
    <property type="entry name" value="Mur ligase, C-terminal domain"/>
    <property type="match status" value="1"/>
</dbReference>
<dbReference type="Gene3D" id="3.40.1190.10">
    <property type="entry name" value="Mur-like, catalytic domain"/>
    <property type="match status" value="1"/>
</dbReference>
<dbReference type="Gene3D" id="3.40.50.720">
    <property type="entry name" value="NAD(P)-binding Rossmann-like Domain"/>
    <property type="match status" value="1"/>
</dbReference>
<dbReference type="HAMAP" id="MF_00046">
    <property type="entry name" value="MurC"/>
    <property type="match status" value="1"/>
</dbReference>
<dbReference type="InterPro" id="IPR036565">
    <property type="entry name" value="Mur-like_cat_sf"/>
</dbReference>
<dbReference type="InterPro" id="IPR004101">
    <property type="entry name" value="Mur_ligase_C"/>
</dbReference>
<dbReference type="InterPro" id="IPR036615">
    <property type="entry name" value="Mur_ligase_C_dom_sf"/>
</dbReference>
<dbReference type="InterPro" id="IPR013221">
    <property type="entry name" value="Mur_ligase_cen"/>
</dbReference>
<dbReference type="InterPro" id="IPR000713">
    <property type="entry name" value="Mur_ligase_N"/>
</dbReference>
<dbReference type="InterPro" id="IPR050061">
    <property type="entry name" value="MurCDEF_pg_biosynth"/>
</dbReference>
<dbReference type="InterPro" id="IPR005758">
    <property type="entry name" value="UDP-N-AcMur_Ala_ligase_MurC"/>
</dbReference>
<dbReference type="NCBIfam" id="TIGR01082">
    <property type="entry name" value="murC"/>
    <property type="match status" value="1"/>
</dbReference>
<dbReference type="PANTHER" id="PTHR43445:SF3">
    <property type="entry name" value="UDP-N-ACETYLMURAMATE--L-ALANINE LIGASE"/>
    <property type="match status" value="1"/>
</dbReference>
<dbReference type="PANTHER" id="PTHR43445">
    <property type="entry name" value="UDP-N-ACETYLMURAMATE--L-ALANINE LIGASE-RELATED"/>
    <property type="match status" value="1"/>
</dbReference>
<dbReference type="Pfam" id="PF01225">
    <property type="entry name" value="Mur_ligase"/>
    <property type="match status" value="1"/>
</dbReference>
<dbReference type="Pfam" id="PF02875">
    <property type="entry name" value="Mur_ligase_C"/>
    <property type="match status" value="1"/>
</dbReference>
<dbReference type="Pfam" id="PF08245">
    <property type="entry name" value="Mur_ligase_M"/>
    <property type="match status" value="1"/>
</dbReference>
<dbReference type="SUPFAM" id="SSF51984">
    <property type="entry name" value="MurCD N-terminal domain"/>
    <property type="match status" value="1"/>
</dbReference>
<dbReference type="SUPFAM" id="SSF53623">
    <property type="entry name" value="MurD-like peptide ligases, catalytic domain"/>
    <property type="match status" value="1"/>
</dbReference>
<dbReference type="SUPFAM" id="SSF53244">
    <property type="entry name" value="MurD-like peptide ligases, peptide-binding domain"/>
    <property type="match status" value="1"/>
</dbReference>
<sequence>MRLPREIGPIHFVGIGGIGMSGIAEVLVNLGYAVQGSDASDNYNLDRLRKKGAKVSVGHKAENVDGAEVVVVSTAIKRDNPELMAARERRIPVVRRAEMLAELMRLKSCVAIAGTHGKTTTTTMVATLLDAGGLDPTVINGGIINAYGSNARLGAGDWMVVEADESDGTFLKLPTDVAIVTNVDPEHLDHFKTFEAVQDAFRHFVENLPFYGFAVMCIDHPVVQSLVGKIEDRRIITYGENPQADVRLVDLTPMGGGSKFKVAFRDRKTGAVHEIPDLMLPMPGRHNASNATAAIAVARELGVSDEAIRSAIAGFGGVKRRFTKTGEWNGVTVIDDYGHHPVEIAAVLKAARESTNGKIVAVVQPHRYTRLQSLFEEFCTCFNDADAVIVADVYAAGEAPIDGIDRDHFVAGLRAHGHREVVPLPAAPELAGIVKGLAKSGDLVVCLGAGNITQWAYALPGELNALG</sequence>
<evidence type="ECO:0000255" key="1">
    <source>
        <dbReference type="HAMAP-Rule" id="MF_00046"/>
    </source>
</evidence>
<organism>
    <name type="scientific">Bradyrhizobium diazoefficiens (strain JCM 10833 / BCRC 13528 / IAM 13628 / NBRC 14792 / USDA 110)</name>
    <dbReference type="NCBI Taxonomy" id="224911"/>
    <lineage>
        <taxon>Bacteria</taxon>
        <taxon>Pseudomonadati</taxon>
        <taxon>Pseudomonadota</taxon>
        <taxon>Alphaproteobacteria</taxon>
        <taxon>Hyphomicrobiales</taxon>
        <taxon>Nitrobacteraceae</taxon>
        <taxon>Bradyrhizobium</taxon>
    </lineage>
</organism>